<evidence type="ECO:0000255" key="1">
    <source>
        <dbReference type="HAMAP-Rule" id="MF_00014"/>
    </source>
</evidence>
<keyword id="KW-0143">Chaperone</keyword>
<keyword id="KW-0963">Cytoplasm</keyword>
<keyword id="KW-0690">Ribosome biogenesis</keyword>
<keyword id="KW-0698">rRNA processing</keyword>
<accession>Q65VG2</accession>
<sequence length="178" mass="20560">MNKMDRQRIETVGKLGSTYGIRGWLRIYSSTENAESIFDYQPWFLKIKDQWQAIELETWKHHNHELIVKLKNINDRETAQTLANVEIGVDLSVFPALEEGDFYWHDLIGCQVVNLQGYAMGTVSEMMETGSNDVLVVRANAKDAFGKQERLIPFLYEQVVKRVDLTTKTIEVDWDAGF</sequence>
<dbReference type="EMBL" id="AE016827">
    <property type="protein sequence ID" value="AAU37048.1"/>
    <property type="molecule type" value="Genomic_DNA"/>
</dbReference>
<dbReference type="SMR" id="Q65VG2"/>
<dbReference type="STRING" id="221988.MS0441"/>
<dbReference type="KEGG" id="msu:MS0441"/>
<dbReference type="eggNOG" id="COG0806">
    <property type="taxonomic scope" value="Bacteria"/>
</dbReference>
<dbReference type="HOGENOM" id="CLU_077636_1_0_6"/>
<dbReference type="Proteomes" id="UP000000607">
    <property type="component" value="Chromosome"/>
</dbReference>
<dbReference type="GO" id="GO:0005737">
    <property type="term" value="C:cytoplasm"/>
    <property type="evidence" value="ECO:0007669"/>
    <property type="project" value="UniProtKB-SubCell"/>
</dbReference>
<dbReference type="GO" id="GO:0005840">
    <property type="term" value="C:ribosome"/>
    <property type="evidence" value="ECO:0007669"/>
    <property type="project" value="InterPro"/>
</dbReference>
<dbReference type="GO" id="GO:0043022">
    <property type="term" value="F:ribosome binding"/>
    <property type="evidence" value="ECO:0007669"/>
    <property type="project" value="InterPro"/>
</dbReference>
<dbReference type="GO" id="GO:0042274">
    <property type="term" value="P:ribosomal small subunit biogenesis"/>
    <property type="evidence" value="ECO:0007669"/>
    <property type="project" value="UniProtKB-UniRule"/>
</dbReference>
<dbReference type="GO" id="GO:0006364">
    <property type="term" value="P:rRNA processing"/>
    <property type="evidence" value="ECO:0007669"/>
    <property type="project" value="UniProtKB-UniRule"/>
</dbReference>
<dbReference type="Gene3D" id="2.30.30.240">
    <property type="entry name" value="PRC-barrel domain"/>
    <property type="match status" value="1"/>
</dbReference>
<dbReference type="Gene3D" id="2.40.30.60">
    <property type="entry name" value="RimM"/>
    <property type="match status" value="1"/>
</dbReference>
<dbReference type="HAMAP" id="MF_00014">
    <property type="entry name" value="Ribosome_mat_RimM"/>
    <property type="match status" value="1"/>
</dbReference>
<dbReference type="InterPro" id="IPR011033">
    <property type="entry name" value="PRC_barrel-like_sf"/>
</dbReference>
<dbReference type="InterPro" id="IPR056792">
    <property type="entry name" value="PRC_RimM"/>
</dbReference>
<dbReference type="InterPro" id="IPR011961">
    <property type="entry name" value="RimM"/>
</dbReference>
<dbReference type="InterPro" id="IPR002676">
    <property type="entry name" value="RimM_N"/>
</dbReference>
<dbReference type="InterPro" id="IPR036976">
    <property type="entry name" value="RimM_N_sf"/>
</dbReference>
<dbReference type="InterPro" id="IPR009000">
    <property type="entry name" value="Transl_B-barrel_sf"/>
</dbReference>
<dbReference type="NCBIfam" id="TIGR02273">
    <property type="entry name" value="16S_RimM"/>
    <property type="match status" value="1"/>
</dbReference>
<dbReference type="PANTHER" id="PTHR33692">
    <property type="entry name" value="RIBOSOME MATURATION FACTOR RIMM"/>
    <property type="match status" value="1"/>
</dbReference>
<dbReference type="PANTHER" id="PTHR33692:SF1">
    <property type="entry name" value="RIBOSOME MATURATION FACTOR RIMM"/>
    <property type="match status" value="1"/>
</dbReference>
<dbReference type="Pfam" id="PF24986">
    <property type="entry name" value="PRC_RimM"/>
    <property type="match status" value="1"/>
</dbReference>
<dbReference type="Pfam" id="PF01782">
    <property type="entry name" value="RimM"/>
    <property type="match status" value="1"/>
</dbReference>
<dbReference type="SUPFAM" id="SSF50346">
    <property type="entry name" value="PRC-barrel domain"/>
    <property type="match status" value="1"/>
</dbReference>
<dbReference type="SUPFAM" id="SSF50447">
    <property type="entry name" value="Translation proteins"/>
    <property type="match status" value="1"/>
</dbReference>
<reference key="1">
    <citation type="journal article" date="2004" name="Nat. Biotechnol.">
        <title>The genome sequence of the capnophilic rumen bacterium Mannheimia succiniciproducens.</title>
        <authorList>
            <person name="Hong S.H."/>
            <person name="Kim J.S."/>
            <person name="Lee S.Y."/>
            <person name="In Y.H."/>
            <person name="Choi S.S."/>
            <person name="Rih J.-K."/>
            <person name="Kim C.H."/>
            <person name="Jeong H."/>
            <person name="Hur C.G."/>
            <person name="Kim J.J."/>
        </authorList>
    </citation>
    <scope>NUCLEOTIDE SEQUENCE [LARGE SCALE GENOMIC DNA]</scope>
    <source>
        <strain>KCTC 0769BP / MBEL55E</strain>
    </source>
</reference>
<feature type="chain" id="PRO_0000163315" description="Ribosome maturation factor RimM">
    <location>
        <begin position="1"/>
        <end position="178"/>
    </location>
</feature>
<feature type="domain" description="PRC barrel" evidence="1">
    <location>
        <begin position="99"/>
        <end position="178"/>
    </location>
</feature>
<protein>
    <recommendedName>
        <fullName evidence="1">Ribosome maturation factor RimM</fullName>
    </recommendedName>
</protein>
<organism>
    <name type="scientific">Mannheimia succiniciproducens (strain KCTC 0769BP / MBEL55E)</name>
    <dbReference type="NCBI Taxonomy" id="221988"/>
    <lineage>
        <taxon>Bacteria</taxon>
        <taxon>Pseudomonadati</taxon>
        <taxon>Pseudomonadota</taxon>
        <taxon>Gammaproteobacteria</taxon>
        <taxon>Pasteurellales</taxon>
        <taxon>Pasteurellaceae</taxon>
        <taxon>Basfia</taxon>
    </lineage>
</organism>
<gene>
    <name evidence="1" type="primary">rimM</name>
    <name type="ordered locus">MS0441</name>
</gene>
<name>RIMM_MANSM</name>
<proteinExistence type="inferred from homology"/>
<comment type="function">
    <text evidence="1">An accessory protein needed during the final step in the assembly of 30S ribosomal subunit, possibly for assembly of the head region. Essential for efficient processing of 16S rRNA. May be needed both before and after RbfA during the maturation of 16S rRNA. It has affinity for free ribosomal 30S subunits but not for 70S ribosomes.</text>
</comment>
<comment type="subunit">
    <text evidence="1">Binds ribosomal protein uS19.</text>
</comment>
<comment type="subcellular location">
    <subcellularLocation>
        <location evidence="1">Cytoplasm</location>
    </subcellularLocation>
</comment>
<comment type="domain">
    <text evidence="1">The PRC barrel domain binds ribosomal protein uS19.</text>
</comment>
<comment type="similarity">
    <text evidence="1">Belongs to the RimM family.</text>
</comment>